<feature type="chain" id="PRO_1000116091" description="Ferrochelatase">
    <location>
        <begin position="1"/>
        <end position="320"/>
    </location>
</feature>
<feature type="binding site" evidence="1">
    <location>
        <position position="194"/>
    </location>
    <ligand>
        <name>Fe cation</name>
        <dbReference type="ChEBI" id="CHEBI:24875"/>
    </ligand>
</feature>
<feature type="binding site" evidence="1">
    <location>
        <position position="275"/>
    </location>
    <ligand>
        <name>Fe cation</name>
        <dbReference type="ChEBI" id="CHEBI:24875"/>
    </ligand>
</feature>
<gene>
    <name evidence="1" type="primary">hemH</name>
    <name type="ordered locus">Xfasm12_1736</name>
</gene>
<protein>
    <recommendedName>
        <fullName evidence="1">Ferrochelatase</fullName>
        <ecNumber evidence="1">4.98.1.1</ecNumber>
    </recommendedName>
    <alternativeName>
        <fullName evidence="1">Heme synthase</fullName>
    </alternativeName>
    <alternativeName>
        <fullName evidence="1">Protoheme ferro-lyase</fullName>
    </alternativeName>
</protein>
<proteinExistence type="inferred from homology"/>
<keyword id="KW-0963">Cytoplasm</keyword>
<keyword id="KW-0350">Heme biosynthesis</keyword>
<keyword id="KW-0408">Iron</keyword>
<keyword id="KW-0456">Lyase</keyword>
<keyword id="KW-0479">Metal-binding</keyword>
<keyword id="KW-0627">Porphyrin biosynthesis</keyword>
<sequence length="320" mass="35703">MNHTSDTALLIVNLGTPEAPTAAAVRRYLGEFLSDRRVVSIPPLFWKPLLHMVILPIRGPRSASKYAKVWLQEGSPLSVYTRRIAEGLTQHLPDWRVAWAMRYGAPALTKALDALQAQQVRRIVILPLYPQYSTTTTASVQDVVEAWCKRTPQVQVECIQDYAEDPAWVAAVAASIRRHWQAHGRSEKLMFSFHGLPQRVANNGDPYPQRCQVSASLIAAALNLNESEWVLGYQSRFGTERWLQPYAEPTLWALAESGIRRFDLVCPGFSVDCLETLEEVALGFSETLAARGATMRYIPCLNDDPAHVQALAGLAQRALL</sequence>
<evidence type="ECO:0000255" key="1">
    <source>
        <dbReference type="HAMAP-Rule" id="MF_00323"/>
    </source>
</evidence>
<comment type="function">
    <text evidence="1">Catalyzes the ferrous insertion into protoporphyrin IX.</text>
</comment>
<comment type="catalytic activity">
    <reaction evidence="1">
        <text>heme b + 2 H(+) = protoporphyrin IX + Fe(2+)</text>
        <dbReference type="Rhea" id="RHEA:22584"/>
        <dbReference type="ChEBI" id="CHEBI:15378"/>
        <dbReference type="ChEBI" id="CHEBI:29033"/>
        <dbReference type="ChEBI" id="CHEBI:57306"/>
        <dbReference type="ChEBI" id="CHEBI:60344"/>
        <dbReference type="EC" id="4.98.1.1"/>
    </reaction>
</comment>
<comment type="pathway">
    <text evidence="1">Porphyrin-containing compound metabolism; protoheme biosynthesis; protoheme from protoporphyrin-IX: step 1/1.</text>
</comment>
<comment type="subcellular location">
    <subcellularLocation>
        <location evidence="1">Cytoplasm</location>
    </subcellularLocation>
</comment>
<comment type="similarity">
    <text evidence="1">Belongs to the ferrochelatase family.</text>
</comment>
<organism>
    <name type="scientific">Xylella fastidiosa (strain M12)</name>
    <dbReference type="NCBI Taxonomy" id="405440"/>
    <lineage>
        <taxon>Bacteria</taxon>
        <taxon>Pseudomonadati</taxon>
        <taxon>Pseudomonadota</taxon>
        <taxon>Gammaproteobacteria</taxon>
        <taxon>Lysobacterales</taxon>
        <taxon>Lysobacteraceae</taxon>
        <taxon>Xylella</taxon>
    </lineage>
</organism>
<accession>B0U456</accession>
<reference key="1">
    <citation type="journal article" date="2010" name="J. Bacteriol.">
        <title>Whole genome sequences of two Xylella fastidiosa strains (M12 and M23) causing almond leaf scorch disease in California.</title>
        <authorList>
            <person name="Chen J."/>
            <person name="Xie G."/>
            <person name="Han S."/>
            <person name="Chertkov O."/>
            <person name="Sims D."/>
            <person name="Civerolo E.L."/>
        </authorList>
    </citation>
    <scope>NUCLEOTIDE SEQUENCE [LARGE SCALE GENOMIC DNA]</scope>
    <source>
        <strain>M12</strain>
    </source>
</reference>
<dbReference type="EC" id="4.98.1.1" evidence="1"/>
<dbReference type="EMBL" id="CP000941">
    <property type="protein sequence ID" value="ACA12635.1"/>
    <property type="molecule type" value="Genomic_DNA"/>
</dbReference>
<dbReference type="RefSeq" id="WP_004083542.1">
    <property type="nucleotide sequence ID" value="NC_010513.1"/>
</dbReference>
<dbReference type="SMR" id="B0U456"/>
<dbReference type="KEGG" id="xfm:Xfasm12_1736"/>
<dbReference type="HOGENOM" id="CLU_018884_0_0_6"/>
<dbReference type="UniPathway" id="UPA00252">
    <property type="reaction ID" value="UER00325"/>
</dbReference>
<dbReference type="GO" id="GO:0005737">
    <property type="term" value="C:cytoplasm"/>
    <property type="evidence" value="ECO:0007669"/>
    <property type="project" value="UniProtKB-SubCell"/>
</dbReference>
<dbReference type="GO" id="GO:0004325">
    <property type="term" value="F:ferrochelatase activity"/>
    <property type="evidence" value="ECO:0007669"/>
    <property type="project" value="UniProtKB-UniRule"/>
</dbReference>
<dbReference type="GO" id="GO:0046872">
    <property type="term" value="F:metal ion binding"/>
    <property type="evidence" value="ECO:0007669"/>
    <property type="project" value="UniProtKB-KW"/>
</dbReference>
<dbReference type="GO" id="GO:0006783">
    <property type="term" value="P:heme biosynthetic process"/>
    <property type="evidence" value="ECO:0007669"/>
    <property type="project" value="UniProtKB-UniRule"/>
</dbReference>
<dbReference type="CDD" id="cd00419">
    <property type="entry name" value="Ferrochelatase_C"/>
    <property type="match status" value="1"/>
</dbReference>
<dbReference type="CDD" id="cd03411">
    <property type="entry name" value="Ferrochelatase_N"/>
    <property type="match status" value="1"/>
</dbReference>
<dbReference type="FunFam" id="3.40.50.1400:FF:000012">
    <property type="entry name" value="Ferrochelatase"/>
    <property type="match status" value="1"/>
</dbReference>
<dbReference type="Gene3D" id="3.40.50.1400">
    <property type="match status" value="2"/>
</dbReference>
<dbReference type="HAMAP" id="MF_00323">
    <property type="entry name" value="Ferrochelatase"/>
    <property type="match status" value="1"/>
</dbReference>
<dbReference type="InterPro" id="IPR001015">
    <property type="entry name" value="Ferrochelatase"/>
</dbReference>
<dbReference type="InterPro" id="IPR019772">
    <property type="entry name" value="Ferrochelatase_AS"/>
</dbReference>
<dbReference type="InterPro" id="IPR033644">
    <property type="entry name" value="Ferrochelatase_C"/>
</dbReference>
<dbReference type="InterPro" id="IPR033659">
    <property type="entry name" value="Ferrochelatase_N"/>
</dbReference>
<dbReference type="NCBIfam" id="TIGR00109">
    <property type="entry name" value="hemH"/>
    <property type="match status" value="1"/>
</dbReference>
<dbReference type="PANTHER" id="PTHR11108">
    <property type="entry name" value="FERROCHELATASE"/>
    <property type="match status" value="1"/>
</dbReference>
<dbReference type="PANTHER" id="PTHR11108:SF1">
    <property type="entry name" value="FERROCHELATASE, MITOCHONDRIAL"/>
    <property type="match status" value="1"/>
</dbReference>
<dbReference type="Pfam" id="PF00762">
    <property type="entry name" value="Ferrochelatase"/>
    <property type="match status" value="1"/>
</dbReference>
<dbReference type="SUPFAM" id="SSF53800">
    <property type="entry name" value="Chelatase"/>
    <property type="match status" value="1"/>
</dbReference>
<dbReference type="PROSITE" id="PS00534">
    <property type="entry name" value="FERROCHELATASE"/>
    <property type="match status" value="1"/>
</dbReference>
<name>HEMH_XYLFM</name>